<feature type="chain" id="PRO_1000184528" description="ATP synthase subunit c">
    <location>
        <begin position="1"/>
        <end position="85"/>
    </location>
</feature>
<feature type="transmembrane region" description="Helical" evidence="1">
    <location>
        <begin position="10"/>
        <end position="30"/>
    </location>
</feature>
<feature type="transmembrane region" description="Helical" evidence="1">
    <location>
        <begin position="53"/>
        <end position="73"/>
    </location>
</feature>
<feature type="site" description="Reversibly protonated during proton transport" evidence="1">
    <location>
        <position position="60"/>
    </location>
</feature>
<proteinExistence type="inferred from homology"/>
<name>ATPL_VIBCH</name>
<evidence type="ECO:0000255" key="1">
    <source>
        <dbReference type="HAMAP-Rule" id="MF_01396"/>
    </source>
</evidence>
<keyword id="KW-0066">ATP synthesis</keyword>
<keyword id="KW-0997">Cell inner membrane</keyword>
<keyword id="KW-1003">Cell membrane</keyword>
<keyword id="KW-0138">CF(0)</keyword>
<keyword id="KW-0375">Hydrogen ion transport</keyword>
<keyword id="KW-0406">Ion transport</keyword>
<keyword id="KW-0446">Lipid-binding</keyword>
<keyword id="KW-0472">Membrane</keyword>
<keyword id="KW-1185">Reference proteome</keyword>
<keyword id="KW-0812">Transmembrane</keyword>
<keyword id="KW-1133">Transmembrane helix</keyword>
<keyword id="KW-0813">Transport</keyword>
<organism>
    <name type="scientific">Vibrio cholerae serotype O1 (strain ATCC 39315 / El Tor Inaba N16961)</name>
    <dbReference type="NCBI Taxonomy" id="243277"/>
    <lineage>
        <taxon>Bacteria</taxon>
        <taxon>Pseudomonadati</taxon>
        <taxon>Pseudomonadota</taxon>
        <taxon>Gammaproteobacteria</taxon>
        <taxon>Vibrionales</taxon>
        <taxon>Vibrionaceae</taxon>
        <taxon>Vibrio</taxon>
    </lineage>
</organism>
<comment type="function">
    <text evidence="1">F(1)F(0) ATP synthase produces ATP from ADP in the presence of a proton or sodium gradient. F-type ATPases consist of two structural domains, F(1) containing the extramembraneous catalytic core and F(0) containing the membrane proton channel, linked together by a central stalk and a peripheral stalk. During catalysis, ATP synthesis in the catalytic domain of F(1) is coupled via a rotary mechanism of the central stalk subunits to proton translocation.</text>
</comment>
<comment type="function">
    <text evidence="1">Key component of the F(0) channel; it plays a direct role in translocation across the membrane. A homomeric c-ring of between 10-14 subunits forms the central stalk rotor element with the F(1) delta and epsilon subunits.</text>
</comment>
<comment type="subunit">
    <text evidence="1">F-type ATPases have 2 components, F(1) - the catalytic core - and F(0) - the membrane proton channel. F(1) has five subunits: alpha(3), beta(3), gamma(1), delta(1), epsilon(1). F(0) has three main subunits: a(1), b(2) and c(10-14). The alpha and beta chains form an alternating ring which encloses part of the gamma chain. F(1) is attached to F(0) by a central stalk formed by the gamma and epsilon chains, while a peripheral stalk is formed by the delta and b chains.</text>
</comment>
<comment type="subcellular location">
    <subcellularLocation>
        <location evidence="1">Cell inner membrane</location>
        <topology evidence="1">Multi-pass membrane protein</topology>
    </subcellularLocation>
</comment>
<comment type="similarity">
    <text evidence="1">Belongs to the ATPase C chain family.</text>
</comment>
<accession>Q9KNH0</accession>
<sequence length="85" mass="8695">METVLSFSAIAVAIIVGLCAVGTAIGFAVLGGKFLEGAARQPEMAPMLQVKMFIIAGLLDAVPMIGIVIALLFTFANPFVGQLAG</sequence>
<protein>
    <recommendedName>
        <fullName evidence="1">ATP synthase subunit c</fullName>
    </recommendedName>
    <alternativeName>
        <fullName evidence="1">ATP synthase F(0) sector subunit c</fullName>
    </alternativeName>
    <alternativeName>
        <fullName evidence="1">F-type ATPase subunit c</fullName>
        <shortName evidence="1">F-ATPase subunit c</shortName>
    </alternativeName>
    <alternativeName>
        <fullName evidence="1">Lipid-binding protein</fullName>
    </alternativeName>
</protein>
<gene>
    <name evidence="1" type="primary">atpE</name>
    <name type="ordered locus">VC_2769</name>
</gene>
<reference key="1">
    <citation type="journal article" date="2000" name="Nature">
        <title>DNA sequence of both chromosomes of the cholera pathogen Vibrio cholerae.</title>
        <authorList>
            <person name="Heidelberg J.F."/>
            <person name="Eisen J.A."/>
            <person name="Nelson W.C."/>
            <person name="Clayton R.A."/>
            <person name="Gwinn M.L."/>
            <person name="Dodson R.J."/>
            <person name="Haft D.H."/>
            <person name="Hickey E.K."/>
            <person name="Peterson J.D."/>
            <person name="Umayam L.A."/>
            <person name="Gill S.R."/>
            <person name="Nelson K.E."/>
            <person name="Read T.D."/>
            <person name="Tettelin H."/>
            <person name="Richardson D.L."/>
            <person name="Ermolaeva M.D."/>
            <person name="Vamathevan J.J."/>
            <person name="Bass S."/>
            <person name="Qin H."/>
            <person name="Dragoi I."/>
            <person name="Sellers P."/>
            <person name="McDonald L.A."/>
            <person name="Utterback T.R."/>
            <person name="Fleischmann R.D."/>
            <person name="Nierman W.C."/>
            <person name="White O."/>
            <person name="Salzberg S.L."/>
            <person name="Smith H.O."/>
            <person name="Colwell R.R."/>
            <person name="Mekalanos J.J."/>
            <person name="Venter J.C."/>
            <person name="Fraser C.M."/>
        </authorList>
    </citation>
    <scope>NUCLEOTIDE SEQUENCE [LARGE SCALE GENOMIC DNA]</scope>
    <source>
        <strain>ATCC 39315 / El Tor Inaba N16961</strain>
    </source>
</reference>
<dbReference type="EMBL" id="AE003852">
    <property type="protein sequence ID" value="AAF95908.1"/>
    <property type="molecule type" value="Genomic_DNA"/>
</dbReference>
<dbReference type="PIR" id="A82035">
    <property type="entry name" value="A82035"/>
</dbReference>
<dbReference type="RefSeq" id="NP_232395.1">
    <property type="nucleotide sequence ID" value="NC_002505.1"/>
</dbReference>
<dbReference type="RefSeq" id="WP_000450922.1">
    <property type="nucleotide sequence ID" value="NZ_LT906614.1"/>
</dbReference>
<dbReference type="SMR" id="Q9KNH0"/>
<dbReference type="STRING" id="243277.VC_2769"/>
<dbReference type="DNASU" id="2614946"/>
<dbReference type="EnsemblBacteria" id="AAF95908">
    <property type="protein sequence ID" value="AAF95908"/>
    <property type="gene ID" value="VC_2769"/>
</dbReference>
<dbReference type="GeneID" id="94015074"/>
<dbReference type="KEGG" id="vch:VC_2769"/>
<dbReference type="PATRIC" id="fig|243277.26.peg.2644"/>
<dbReference type="eggNOG" id="ENOG5032S3K">
    <property type="taxonomic scope" value="Bacteria"/>
</dbReference>
<dbReference type="HOGENOM" id="CLU_148047_1_0_6"/>
<dbReference type="Proteomes" id="UP000000584">
    <property type="component" value="Chromosome 1"/>
</dbReference>
<dbReference type="GO" id="GO:0005886">
    <property type="term" value="C:plasma membrane"/>
    <property type="evidence" value="ECO:0007669"/>
    <property type="project" value="UniProtKB-SubCell"/>
</dbReference>
<dbReference type="GO" id="GO:0045259">
    <property type="term" value="C:proton-transporting ATP synthase complex"/>
    <property type="evidence" value="ECO:0007669"/>
    <property type="project" value="UniProtKB-KW"/>
</dbReference>
<dbReference type="GO" id="GO:0033177">
    <property type="term" value="C:proton-transporting two-sector ATPase complex, proton-transporting domain"/>
    <property type="evidence" value="ECO:0007669"/>
    <property type="project" value="InterPro"/>
</dbReference>
<dbReference type="GO" id="GO:0008289">
    <property type="term" value="F:lipid binding"/>
    <property type="evidence" value="ECO:0007669"/>
    <property type="project" value="UniProtKB-KW"/>
</dbReference>
<dbReference type="GO" id="GO:0046933">
    <property type="term" value="F:proton-transporting ATP synthase activity, rotational mechanism"/>
    <property type="evidence" value="ECO:0007669"/>
    <property type="project" value="UniProtKB-UniRule"/>
</dbReference>
<dbReference type="GO" id="GO:0015986">
    <property type="term" value="P:proton motive force-driven ATP synthesis"/>
    <property type="evidence" value="ECO:0000318"/>
    <property type="project" value="GO_Central"/>
</dbReference>
<dbReference type="CDD" id="cd18185">
    <property type="entry name" value="ATP-synt_Fo_c_ATPE"/>
    <property type="match status" value="1"/>
</dbReference>
<dbReference type="FunFam" id="1.20.20.10:FF:000002">
    <property type="entry name" value="ATP synthase subunit c"/>
    <property type="match status" value="1"/>
</dbReference>
<dbReference type="Gene3D" id="1.20.20.10">
    <property type="entry name" value="F1F0 ATP synthase subunit C"/>
    <property type="match status" value="1"/>
</dbReference>
<dbReference type="HAMAP" id="MF_01396">
    <property type="entry name" value="ATP_synth_c_bact"/>
    <property type="match status" value="1"/>
</dbReference>
<dbReference type="InterPro" id="IPR005953">
    <property type="entry name" value="ATP_synth_csu_bac/chlpt"/>
</dbReference>
<dbReference type="InterPro" id="IPR000454">
    <property type="entry name" value="ATP_synth_F0_csu"/>
</dbReference>
<dbReference type="InterPro" id="IPR020537">
    <property type="entry name" value="ATP_synth_F0_csu_DDCD_BS"/>
</dbReference>
<dbReference type="InterPro" id="IPR038662">
    <property type="entry name" value="ATP_synth_F0_csu_sf"/>
</dbReference>
<dbReference type="InterPro" id="IPR002379">
    <property type="entry name" value="ATPase_proteolipid_c-like_dom"/>
</dbReference>
<dbReference type="InterPro" id="IPR035921">
    <property type="entry name" value="F/V-ATP_Csub_sf"/>
</dbReference>
<dbReference type="NCBIfam" id="TIGR01260">
    <property type="entry name" value="ATP_synt_c"/>
    <property type="match status" value="1"/>
</dbReference>
<dbReference type="NCBIfam" id="NF005363">
    <property type="entry name" value="PRK06876.1"/>
    <property type="match status" value="1"/>
</dbReference>
<dbReference type="Pfam" id="PF00137">
    <property type="entry name" value="ATP-synt_C"/>
    <property type="match status" value="1"/>
</dbReference>
<dbReference type="PRINTS" id="PR00124">
    <property type="entry name" value="ATPASEC"/>
</dbReference>
<dbReference type="SUPFAM" id="SSF81333">
    <property type="entry name" value="F1F0 ATP synthase subunit C"/>
    <property type="match status" value="1"/>
</dbReference>
<dbReference type="PROSITE" id="PS00605">
    <property type="entry name" value="ATPASE_C"/>
    <property type="match status" value="1"/>
</dbReference>